<name>CYB_MUSPU</name>
<keyword id="KW-0249">Electron transport</keyword>
<keyword id="KW-0349">Heme</keyword>
<keyword id="KW-0408">Iron</keyword>
<keyword id="KW-0472">Membrane</keyword>
<keyword id="KW-0479">Metal-binding</keyword>
<keyword id="KW-0496">Mitochondrion</keyword>
<keyword id="KW-0999">Mitochondrion inner membrane</keyword>
<keyword id="KW-0679">Respiratory chain</keyword>
<keyword id="KW-0812">Transmembrane</keyword>
<keyword id="KW-1133">Transmembrane helix</keyword>
<keyword id="KW-0813">Transport</keyword>
<keyword id="KW-0830">Ubiquinone</keyword>
<gene>
    <name type="primary">MT-CYB</name>
    <name type="synonym">COB</name>
    <name type="synonym">CYTB</name>
    <name type="synonym">MTCYB</name>
</gene>
<accession>Q35065</accession>
<geneLocation type="mitochondrion"/>
<dbReference type="EMBL" id="AF057128">
    <property type="protein sequence ID" value="AAC33708.1"/>
    <property type="molecule type" value="Genomic_DNA"/>
</dbReference>
<dbReference type="EMBL" id="U12845">
    <property type="protein sequence ID" value="AAA67254.1"/>
    <property type="molecule type" value="Genomic_DNA"/>
</dbReference>
<dbReference type="RefSeq" id="YP_007625262.1">
    <property type="nucleotide sequence ID" value="NC_020638.1"/>
</dbReference>
<dbReference type="SMR" id="Q35065"/>
<dbReference type="GeneID" id="14841809"/>
<dbReference type="CTD" id="4519"/>
<dbReference type="GO" id="GO:0005743">
    <property type="term" value="C:mitochondrial inner membrane"/>
    <property type="evidence" value="ECO:0007669"/>
    <property type="project" value="UniProtKB-SubCell"/>
</dbReference>
<dbReference type="GO" id="GO:0045275">
    <property type="term" value="C:respiratory chain complex III"/>
    <property type="evidence" value="ECO:0007669"/>
    <property type="project" value="InterPro"/>
</dbReference>
<dbReference type="GO" id="GO:0046872">
    <property type="term" value="F:metal ion binding"/>
    <property type="evidence" value="ECO:0007669"/>
    <property type="project" value="UniProtKB-KW"/>
</dbReference>
<dbReference type="GO" id="GO:0008121">
    <property type="term" value="F:ubiquinol-cytochrome-c reductase activity"/>
    <property type="evidence" value="ECO:0007669"/>
    <property type="project" value="InterPro"/>
</dbReference>
<dbReference type="GO" id="GO:0006122">
    <property type="term" value="P:mitochondrial electron transport, ubiquinol to cytochrome c"/>
    <property type="evidence" value="ECO:0007669"/>
    <property type="project" value="TreeGrafter"/>
</dbReference>
<dbReference type="CDD" id="cd00290">
    <property type="entry name" value="cytochrome_b_C"/>
    <property type="match status" value="1"/>
</dbReference>
<dbReference type="CDD" id="cd00284">
    <property type="entry name" value="Cytochrome_b_N"/>
    <property type="match status" value="1"/>
</dbReference>
<dbReference type="FunFam" id="1.20.810.10:FF:000002">
    <property type="entry name" value="Cytochrome b"/>
    <property type="match status" value="1"/>
</dbReference>
<dbReference type="Gene3D" id="1.20.810.10">
    <property type="entry name" value="Cytochrome Bc1 Complex, Chain C"/>
    <property type="match status" value="1"/>
</dbReference>
<dbReference type="InterPro" id="IPR005798">
    <property type="entry name" value="Cyt_b/b6_C"/>
</dbReference>
<dbReference type="InterPro" id="IPR036150">
    <property type="entry name" value="Cyt_b/b6_C_sf"/>
</dbReference>
<dbReference type="InterPro" id="IPR005797">
    <property type="entry name" value="Cyt_b/b6_N"/>
</dbReference>
<dbReference type="InterPro" id="IPR027387">
    <property type="entry name" value="Cytb/b6-like_sf"/>
</dbReference>
<dbReference type="InterPro" id="IPR030689">
    <property type="entry name" value="Cytochrome_b"/>
</dbReference>
<dbReference type="InterPro" id="IPR048260">
    <property type="entry name" value="Cytochrome_b_C_euk/bac"/>
</dbReference>
<dbReference type="InterPro" id="IPR048259">
    <property type="entry name" value="Cytochrome_b_N_euk/bac"/>
</dbReference>
<dbReference type="InterPro" id="IPR016174">
    <property type="entry name" value="Di-haem_cyt_TM"/>
</dbReference>
<dbReference type="PANTHER" id="PTHR19271">
    <property type="entry name" value="CYTOCHROME B"/>
    <property type="match status" value="1"/>
</dbReference>
<dbReference type="PANTHER" id="PTHR19271:SF16">
    <property type="entry name" value="CYTOCHROME B"/>
    <property type="match status" value="1"/>
</dbReference>
<dbReference type="Pfam" id="PF00032">
    <property type="entry name" value="Cytochrom_B_C"/>
    <property type="match status" value="1"/>
</dbReference>
<dbReference type="Pfam" id="PF00033">
    <property type="entry name" value="Cytochrome_B"/>
    <property type="match status" value="1"/>
</dbReference>
<dbReference type="PIRSF" id="PIRSF038885">
    <property type="entry name" value="COB"/>
    <property type="match status" value="1"/>
</dbReference>
<dbReference type="SUPFAM" id="SSF81648">
    <property type="entry name" value="a domain/subunit of cytochrome bc1 complex (Ubiquinol-cytochrome c reductase)"/>
    <property type="match status" value="1"/>
</dbReference>
<dbReference type="SUPFAM" id="SSF81342">
    <property type="entry name" value="Transmembrane di-heme cytochromes"/>
    <property type="match status" value="1"/>
</dbReference>
<dbReference type="PROSITE" id="PS51003">
    <property type="entry name" value="CYTB_CTER"/>
    <property type="match status" value="1"/>
</dbReference>
<dbReference type="PROSITE" id="PS51002">
    <property type="entry name" value="CYTB_NTER"/>
    <property type="match status" value="1"/>
</dbReference>
<proteinExistence type="inferred from homology"/>
<comment type="function">
    <text evidence="2">Component of the ubiquinol-cytochrome c reductase complex (complex III or cytochrome b-c1 complex) that is part of the mitochondrial respiratory chain. The b-c1 complex mediates electron transfer from ubiquinol to cytochrome c. Contributes to the generation of a proton gradient across the mitochondrial membrane that is then used for ATP synthesis.</text>
</comment>
<comment type="cofactor">
    <cofactor evidence="2">
        <name>heme b</name>
        <dbReference type="ChEBI" id="CHEBI:60344"/>
    </cofactor>
    <text evidence="2">Binds 2 heme b groups non-covalently.</text>
</comment>
<comment type="subunit">
    <text evidence="2">The cytochrome bc1 complex contains 11 subunits: 3 respiratory subunits (MT-CYB, CYC1 and UQCRFS1), 2 core proteins (UQCRC1 and UQCRC2) and 6 low-molecular weight proteins (UQCRH/QCR6, UQCRB/QCR7, UQCRQ/QCR8, UQCR10/QCR9, UQCR11/QCR10 and a cleavage product of UQCRFS1). This cytochrome bc1 complex then forms a dimer.</text>
</comment>
<comment type="subcellular location">
    <subcellularLocation>
        <location evidence="2">Mitochondrion inner membrane</location>
        <topology evidence="2">Multi-pass membrane protein</topology>
    </subcellularLocation>
</comment>
<comment type="miscellaneous">
    <text evidence="1">Heme 1 (or BL or b562) is low-potential and absorbs at about 562 nm, and heme 2 (or BH or b566) is high-potential and absorbs at about 566 nm.</text>
</comment>
<comment type="similarity">
    <text evidence="3 4">Belongs to the cytochrome b family.</text>
</comment>
<comment type="caution">
    <text evidence="2">The full-length protein contains only eight transmembrane helices, not nine as predicted by bioinformatics tools.</text>
</comment>
<feature type="chain" id="PRO_0000061224" description="Cytochrome b">
    <location>
        <begin position="1"/>
        <end position="379"/>
    </location>
</feature>
<feature type="transmembrane region" description="Helical" evidence="2">
    <location>
        <begin position="33"/>
        <end position="53"/>
    </location>
</feature>
<feature type="transmembrane region" description="Helical" evidence="2">
    <location>
        <begin position="77"/>
        <end position="98"/>
    </location>
</feature>
<feature type="transmembrane region" description="Helical" evidence="2">
    <location>
        <begin position="113"/>
        <end position="133"/>
    </location>
</feature>
<feature type="transmembrane region" description="Helical" evidence="2">
    <location>
        <begin position="178"/>
        <end position="198"/>
    </location>
</feature>
<feature type="transmembrane region" description="Helical" evidence="2">
    <location>
        <begin position="226"/>
        <end position="246"/>
    </location>
</feature>
<feature type="transmembrane region" description="Helical" evidence="2">
    <location>
        <begin position="288"/>
        <end position="308"/>
    </location>
</feature>
<feature type="transmembrane region" description="Helical" evidence="2">
    <location>
        <begin position="320"/>
        <end position="340"/>
    </location>
</feature>
<feature type="transmembrane region" description="Helical" evidence="2">
    <location>
        <begin position="347"/>
        <end position="367"/>
    </location>
</feature>
<feature type="binding site" description="axial binding residue" evidence="2">
    <location>
        <position position="83"/>
    </location>
    <ligand>
        <name>heme b</name>
        <dbReference type="ChEBI" id="CHEBI:60344"/>
        <label>b562</label>
    </ligand>
    <ligandPart>
        <name>Fe</name>
        <dbReference type="ChEBI" id="CHEBI:18248"/>
    </ligandPart>
</feature>
<feature type="binding site" description="axial binding residue" evidence="2">
    <location>
        <position position="97"/>
    </location>
    <ligand>
        <name>heme b</name>
        <dbReference type="ChEBI" id="CHEBI:60344"/>
        <label>b566</label>
    </ligand>
    <ligandPart>
        <name>Fe</name>
        <dbReference type="ChEBI" id="CHEBI:18248"/>
    </ligandPart>
</feature>
<feature type="binding site" description="axial binding residue" evidence="2">
    <location>
        <position position="182"/>
    </location>
    <ligand>
        <name>heme b</name>
        <dbReference type="ChEBI" id="CHEBI:60344"/>
        <label>b562</label>
    </ligand>
    <ligandPart>
        <name>Fe</name>
        <dbReference type="ChEBI" id="CHEBI:18248"/>
    </ligandPart>
</feature>
<feature type="binding site" description="axial binding residue" evidence="2">
    <location>
        <position position="196"/>
    </location>
    <ligand>
        <name>heme b</name>
        <dbReference type="ChEBI" id="CHEBI:60344"/>
        <label>b566</label>
    </ligand>
    <ligandPart>
        <name>Fe</name>
        <dbReference type="ChEBI" id="CHEBI:18248"/>
    </ligandPart>
</feature>
<feature type="binding site" evidence="2">
    <location>
        <position position="201"/>
    </location>
    <ligand>
        <name>a ubiquinone</name>
        <dbReference type="ChEBI" id="CHEBI:16389"/>
    </ligand>
</feature>
<sequence length="379" mass="42699">MTNIRKTHPLTKIINNSFIDLPAPSNISAWWNFGSLLGICLIIQILTGLFLAMHYTSDTATAFSSVTHICRDVNYGWIIRYMHANGASMFFICLFLHVGRGLYYGSYMFTETWNIGITLLFAVMATAFMGYVLPWGQMSFWGATVITNLLSAIPYIGTNLVEWIWGGFSVDKATLTRFFAFHFILPFIISALAAVHLLFLHETGSNNPSGIPSDSDKIPFHPYYTIKDILGALLLILMLTLLVLFSPDLLGDPDNYIPANPLNTPPHIKPEWYFLFAYAILRSIPNKLGGVLALIFSILILAIIPLLHTSKQRSMMFRPLSQCLFWLLVADLLTLTWIGGQPVEHPFIIIGQLASILYFMILLVLMPIISIIENNMLKW</sequence>
<protein>
    <recommendedName>
        <fullName>Cytochrome b</fullName>
    </recommendedName>
    <alternativeName>
        <fullName>Complex III subunit 3</fullName>
    </alternativeName>
    <alternativeName>
        <fullName>Complex III subunit III</fullName>
    </alternativeName>
    <alternativeName>
        <fullName>Cytochrome b-c1 complex subunit 3</fullName>
    </alternativeName>
    <alternativeName>
        <fullName>Ubiquinol-cytochrome-c reductase complex cytochrome b subunit</fullName>
    </alternativeName>
</protein>
<organism>
    <name type="scientific">Mustela putorius</name>
    <name type="common">European polecat</name>
    <dbReference type="NCBI Taxonomy" id="9668"/>
    <lineage>
        <taxon>Eukaryota</taxon>
        <taxon>Metazoa</taxon>
        <taxon>Chordata</taxon>
        <taxon>Craniata</taxon>
        <taxon>Vertebrata</taxon>
        <taxon>Euteleostomi</taxon>
        <taxon>Mammalia</taxon>
        <taxon>Eutheria</taxon>
        <taxon>Laurasiatheria</taxon>
        <taxon>Carnivora</taxon>
        <taxon>Caniformia</taxon>
        <taxon>Musteloidea</taxon>
        <taxon>Mustelidae</taxon>
        <taxon>Mustelinae</taxon>
        <taxon>Mustela</taxon>
    </lineage>
</organism>
<reference key="1">
    <citation type="journal article" date="1998" name="J. Zool. (Lond.)">
        <title>Phylogenetic relationships of otters (Carnivora: Mustelidae) based on mitochondrial cytochrome b sequences.</title>
        <authorList>
            <person name="Koepfli K.-P."/>
            <person name="Wayne R.K."/>
        </authorList>
    </citation>
    <scope>NUCLEOTIDE SEQUENCE [GENOMIC DNA]</scope>
</reference>
<reference key="2">
    <citation type="journal article" date="1995" name="Mol. Biol. Evol.">
        <title>Use of spectral analysis to test hypotheses on the origin of pinnipeds.</title>
        <authorList>
            <person name="Lento G.M."/>
            <person name="Hickson R.E."/>
            <person name="Chambers G.K."/>
            <person name="Penny D."/>
        </authorList>
    </citation>
    <scope>NUCLEOTIDE SEQUENCE [GENOMIC DNA] OF 1-125</scope>
</reference>
<evidence type="ECO:0000250" key="1"/>
<evidence type="ECO:0000250" key="2">
    <source>
        <dbReference type="UniProtKB" id="P00157"/>
    </source>
</evidence>
<evidence type="ECO:0000255" key="3">
    <source>
        <dbReference type="PROSITE-ProRule" id="PRU00967"/>
    </source>
</evidence>
<evidence type="ECO:0000255" key="4">
    <source>
        <dbReference type="PROSITE-ProRule" id="PRU00968"/>
    </source>
</evidence>